<dbReference type="EMBL" id="CP001114">
    <property type="protein sequence ID" value="ACO45211.1"/>
    <property type="molecule type" value="Genomic_DNA"/>
</dbReference>
<dbReference type="RefSeq" id="WP_012692334.1">
    <property type="nucleotide sequence ID" value="NC_012526.1"/>
</dbReference>
<dbReference type="SMR" id="C1CZV9"/>
<dbReference type="STRING" id="546414.Deide_03870"/>
<dbReference type="PaxDb" id="546414-Deide_03870"/>
<dbReference type="KEGG" id="ddr:Deide_03870"/>
<dbReference type="eggNOG" id="COG0230">
    <property type="taxonomic scope" value="Bacteria"/>
</dbReference>
<dbReference type="HOGENOM" id="CLU_129938_2_0_0"/>
<dbReference type="OrthoDB" id="9804164at2"/>
<dbReference type="Proteomes" id="UP000002208">
    <property type="component" value="Chromosome"/>
</dbReference>
<dbReference type="GO" id="GO:1990904">
    <property type="term" value="C:ribonucleoprotein complex"/>
    <property type="evidence" value="ECO:0007669"/>
    <property type="project" value="UniProtKB-KW"/>
</dbReference>
<dbReference type="GO" id="GO:0005840">
    <property type="term" value="C:ribosome"/>
    <property type="evidence" value="ECO:0007669"/>
    <property type="project" value="UniProtKB-KW"/>
</dbReference>
<dbReference type="GO" id="GO:0003735">
    <property type="term" value="F:structural constituent of ribosome"/>
    <property type="evidence" value="ECO:0007669"/>
    <property type="project" value="InterPro"/>
</dbReference>
<dbReference type="GO" id="GO:0006412">
    <property type="term" value="P:translation"/>
    <property type="evidence" value="ECO:0007669"/>
    <property type="project" value="UniProtKB-UniRule"/>
</dbReference>
<dbReference type="FunFam" id="1.10.287.3980:FF:000001">
    <property type="entry name" value="Mitochondrial ribosomal protein L34"/>
    <property type="match status" value="1"/>
</dbReference>
<dbReference type="Gene3D" id="1.10.287.3980">
    <property type="match status" value="1"/>
</dbReference>
<dbReference type="HAMAP" id="MF_00391">
    <property type="entry name" value="Ribosomal_bL34"/>
    <property type="match status" value="1"/>
</dbReference>
<dbReference type="InterPro" id="IPR000271">
    <property type="entry name" value="Ribosomal_bL34"/>
</dbReference>
<dbReference type="InterPro" id="IPR020939">
    <property type="entry name" value="Ribosomal_bL34_CS"/>
</dbReference>
<dbReference type="NCBIfam" id="TIGR01030">
    <property type="entry name" value="rpmH_bact"/>
    <property type="match status" value="1"/>
</dbReference>
<dbReference type="PANTHER" id="PTHR14503:SF4">
    <property type="entry name" value="LARGE RIBOSOMAL SUBUNIT PROTEIN BL34M"/>
    <property type="match status" value="1"/>
</dbReference>
<dbReference type="PANTHER" id="PTHR14503">
    <property type="entry name" value="MITOCHONDRIAL RIBOSOMAL PROTEIN 34 FAMILY MEMBER"/>
    <property type="match status" value="1"/>
</dbReference>
<dbReference type="Pfam" id="PF00468">
    <property type="entry name" value="Ribosomal_L34"/>
    <property type="match status" value="1"/>
</dbReference>
<dbReference type="PROSITE" id="PS00784">
    <property type="entry name" value="RIBOSOMAL_L34"/>
    <property type="match status" value="1"/>
</dbReference>
<sequence length="47" mass="5578">MKRTYQPNVRKRAKTHGFRARMKTKSGRNILARRRAKGRHQLTVADE</sequence>
<accession>C1CZV9</accession>
<evidence type="ECO:0000255" key="1">
    <source>
        <dbReference type="HAMAP-Rule" id="MF_00391"/>
    </source>
</evidence>
<evidence type="ECO:0000305" key="2"/>
<gene>
    <name evidence="1" type="primary">rpmH</name>
    <name type="ordered locus">Deide_03870</name>
</gene>
<comment type="similarity">
    <text evidence="1">Belongs to the bacterial ribosomal protein bL34 family.</text>
</comment>
<name>RL34_DEIDV</name>
<proteinExistence type="inferred from homology"/>
<reference key="1">
    <citation type="journal article" date="2009" name="PLoS Genet.">
        <title>Alliance of proteomics and genomics to unravel the specificities of Sahara bacterium Deinococcus deserti.</title>
        <authorList>
            <person name="de Groot A."/>
            <person name="Dulermo R."/>
            <person name="Ortet P."/>
            <person name="Blanchard L."/>
            <person name="Guerin P."/>
            <person name="Fernandez B."/>
            <person name="Vacherie B."/>
            <person name="Dossat C."/>
            <person name="Jolivet E."/>
            <person name="Siguier P."/>
            <person name="Chandler M."/>
            <person name="Barakat M."/>
            <person name="Dedieu A."/>
            <person name="Barbe V."/>
            <person name="Heulin T."/>
            <person name="Sommer S."/>
            <person name="Achouak W."/>
            <person name="Armengaud J."/>
        </authorList>
    </citation>
    <scope>NUCLEOTIDE SEQUENCE [LARGE SCALE GENOMIC DNA]</scope>
    <source>
        <strain>DSM 17065 / CIP 109153 / LMG 22923 / VCD115</strain>
    </source>
</reference>
<organism>
    <name type="scientific">Deinococcus deserti (strain DSM 17065 / CIP 109153 / LMG 22923 / VCD115)</name>
    <dbReference type="NCBI Taxonomy" id="546414"/>
    <lineage>
        <taxon>Bacteria</taxon>
        <taxon>Thermotogati</taxon>
        <taxon>Deinococcota</taxon>
        <taxon>Deinococci</taxon>
        <taxon>Deinococcales</taxon>
        <taxon>Deinococcaceae</taxon>
        <taxon>Deinococcus</taxon>
    </lineage>
</organism>
<feature type="chain" id="PRO_1000205821" description="Large ribosomal subunit protein bL34">
    <location>
        <begin position="1"/>
        <end position="47"/>
    </location>
</feature>
<keyword id="KW-1185">Reference proteome</keyword>
<keyword id="KW-0687">Ribonucleoprotein</keyword>
<keyword id="KW-0689">Ribosomal protein</keyword>
<protein>
    <recommendedName>
        <fullName evidence="1">Large ribosomal subunit protein bL34</fullName>
    </recommendedName>
    <alternativeName>
        <fullName evidence="2">50S ribosomal protein L34</fullName>
    </alternativeName>
</protein>